<dbReference type="EC" id="7.1.2.2" evidence="1"/>
<dbReference type="EMBL" id="CP000753">
    <property type="protein sequence ID" value="ABS10481.1"/>
    <property type="molecule type" value="Genomic_DNA"/>
</dbReference>
<dbReference type="RefSeq" id="WP_006083843.1">
    <property type="nucleotide sequence ID" value="NC_009665.1"/>
</dbReference>
<dbReference type="SMR" id="A6WUJ2"/>
<dbReference type="GeneID" id="11774462"/>
<dbReference type="KEGG" id="sbm:Shew185_4367"/>
<dbReference type="HOGENOM" id="CLU_010091_2_1_6"/>
<dbReference type="GO" id="GO:0005886">
    <property type="term" value="C:plasma membrane"/>
    <property type="evidence" value="ECO:0007669"/>
    <property type="project" value="UniProtKB-SubCell"/>
</dbReference>
<dbReference type="GO" id="GO:0045259">
    <property type="term" value="C:proton-transporting ATP synthase complex"/>
    <property type="evidence" value="ECO:0007669"/>
    <property type="project" value="UniProtKB-KW"/>
</dbReference>
<dbReference type="GO" id="GO:0043531">
    <property type="term" value="F:ADP binding"/>
    <property type="evidence" value="ECO:0007669"/>
    <property type="project" value="TreeGrafter"/>
</dbReference>
<dbReference type="GO" id="GO:0005524">
    <property type="term" value="F:ATP binding"/>
    <property type="evidence" value="ECO:0007669"/>
    <property type="project" value="UniProtKB-UniRule"/>
</dbReference>
<dbReference type="GO" id="GO:0046933">
    <property type="term" value="F:proton-transporting ATP synthase activity, rotational mechanism"/>
    <property type="evidence" value="ECO:0007669"/>
    <property type="project" value="UniProtKB-UniRule"/>
</dbReference>
<dbReference type="CDD" id="cd18113">
    <property type="entry name" value="ATP-synt_F1_alpha_C"/>
    <property type="match status" value="1"/>
</dbReference>
<dbReference type="CDD" id="cd18116">
    <property type="entry name" value="ATP-synt_F1_alpha_N"/>
    <property type="match status" value="1"/>
</dbReference>
<dbReference type="CDD" id="cd01132">
    <property type="entry name" value="F1-ATPase_alpha_CD"/>
    <property type="match status" value="1"/>
</dbReference>
<dbReference type="FunFam" id="1.20.150.20:FF:000001">
    <property type="entry name" value="ATP synthase subunit alpha"/>
    <property type="match status" value="1"/>
</dbReference>
<dbReference type="FunFam" id="2.40.30.20:FF:000001">
    <property type="entry name" value="ATP synthase subunit alpha"/>
    <property type="match status" value="1"/>
</dbReference>
<dbReference type="FunFam" id="3.40.50.300:FF:000002">
    <property type="entry name" value="ATP synthase subunit alpha"/>
    <property type="match status" value="1"/>
</dbReference>
<dbReference type="Gene3D" id="2.40.30.20">
    <property type="match status" value="1"/>
</dbReference>
<dbReference type="Gene3D" id="1.20.150.20">
    <property type="entry name" value="ATP synthase alpha/beta chain, C-terminal domain"/>
    <property type="match status" value="1"/>
</dbReference>
<dbReference type="Gene3D" id="3.40.50.300">
    <property type="entry name" value="P-loop containing nucleotide triphosphate hydrolases"/>
    <property type="match status" value="1"/>
</dbReference>
<dbReference type="HAMAP" id="MF_01346">
    <property type="entry name" value="ATP_synth_alpha_bact"/>
    <property type="match status" value="1"/>
</dbReference>
<dbReference type="InterPro" id="IPR023366">
    <property type="entry name" value="ATP_synth_asu-like_sf"/>
</dbReference>
<dbReference type="InterPro" id="IPR000793">
    <property type="entry name" value="ATP_synth_asu_C"/>
</dbReference>
<dbReference type="InterPro" id="IPR038376">
    <property type="entry name" value="ATP_synth_asu_C_sf"/>
</dbReference>
<dbReference type="InterPro" id="IPR033732">
    <property type="entry name" value="ATP_synth_F1_a_nt-bd_dom"/>
</dbReference>
<dbReference type="InterPro" id="IPR005294">
    <property type="entry name" value="ATP_synth_F1_asu"/>
</dbReference>
<dbReference type="InterPro" id="IPR020003">
    <property type="entry name" value="ATPase_a/bsu_AS"/>
</dbReference>
<dbReference type="InterPro" id="IPR004100">
    <property type="entry name" value="ATPase_F1/V1/A1_a/bsu_N"/>
</dbReference>
<dbReference type="InterPro" id="IPR036121">
    <property type="entry name" value="ATPase_F1/V1/A1_a/bsu_N_sf"/>
</dbReference>
<dbReference type="InterPro" id="IPR000194">
    <property type="entry name" value="ATPase_F1/V1/A1_a/bsu_nucl-bd"/>
</dbReference>
<dbReference type="InterPro" id="IPR027417">
    <property type="entry name" value="P-loop_NTPase"/>
</dbReference>
<dbReference type="NCBIfam" id="TIGR00962">
    <property type="entry name" value="atpA"/>
    <property type="match status" value="1"/>
</dbReference>
<dbReference type="NCBIfam" id="NF009884">
    <property type="entry name" value="PRK13343.1"/>
    <property type="match status" value="1"/>
</dbReference>
<dbReference type="PANTHER" id="PTHR48082">
    <property type="entry name" value="ATP SYNTHASE SUBUNIT ALPHA, MITOCHONDRIAL"/>
    <property type="match status" value="1"/>
</dbReference>
<dbReference type="PANTHER" id="PTHR48082:SF2">
    <property type="entry name" value="ATP SYNTHASE SUBUNIT ALPHA, MITOCHONDRIAL"/>
    <property type="match status" value="1"/>
</dbReference>
<dbReference type="Pfam" id="PF00006">
    <property type="entry name" value="ATP-synt_ab"/>
    <property type="match status" value="1"/>
</dbReference>
<dbReference type="Pfam" id="PF00306">
    <property type="entry name" value="ATP-synt_ab_C"/>
    <property type="match status" value="1"/>
</dbReference>
<dbReference type="Pfam" id="PF02874">
    <property type="entry name" value="ATP-synt_ab_N"/>
    <property type="match status" value="1"/>
</dbReference>
<dbReference type="SUPFAM" id="SSF47917">
    <property type="entry name" value="C-terminal domain of alpha and beta subunits of F1 ATP synthase"/>
    <property type="match status" value="1"/>
</dbReference>
<dbReference type="SUPFAM" id="SSF50615">
    <property type="entry name" value="N-terminal domain of alpha and beta subunits of F1 ATP synthase"/>
    <property type="match status" value="1"/>
</dbReference>
<dbReference type="SUPFAM" id="SSF52540">
    <property type="entry name" value="P-loop containing nucleoside triphosphate hydrolases"/>
    <property type="match status" value="1"/>
</dbReference>
<dbReference type="PROSITE" id="PS00152">
    <property type="entry name" value="ATPASE_ALPHA_BETA"/>
    <property type="match status" value="1"/>
</dbReference>
<comment type="function">
    <text evidence="1">Produces ATP from ADP in the presence of a proton gradient across the membrane. The alpha chain is a regulatory subunit.</text>
</comment>
<comment type="catalytic activity">
    <reaction evidence="1">
        <text>ATP + H2O + 4 H(+)(in) = ADP + phosphate + 5 H(+)(out)</text>
        <dbReference type="Rhea" id="RHEA:57720"/>
        <dbReference type="ChEBI" id="CHEBI:15377"/>
        <dbReference type="ChEBI" id="CHEBI:15378"/>
        <dbReference type="ChEBI" id="CHEBI:30616"/>
        <dbReference type="ChEBI" id="CHEBI:43474"/>
        <dbReference type="ChEBI" id="CHEBI:456216"/>
        <dbReference type="EC" id="7.1.2.2"/>
    </reaction>
</comment>
<comment type="subunit">
    <text evidence="1">F-type ATPases have 2 components, CF(1) - the catalytic core - and CF(0) - the membrane proton channel. CF(1) has five subunits: alpha(3), beta(3), gamma(1), delta(1), epsilon(1). CF(0) has three main subunits: a(1), b(2) and c(9-12). The alpha and beta chains form an alternating ring which encloses part of the gamma chain. CF(1) is attached to CF(0) by a central stalk formed by the gamma and epsilon chains, while a peripheral stalk is formed by the delta and b chains.</text>
</comment>
<comment type="subcellular location">
    <subcellularLocation>
        <location evidence="1">Cell inner membrane</location>
        <topology evidence="1">Peripheral membrane protein</topology>
    </subcellularLocation>
</comment>
<comment type="similarity">
    <text evidence="1">Belongs to the ATPase alpha/beta chains family.</text>
</comment>
<name>ATPA_SHEB8</name>
<feature type="chain" id="PRO_1000055081" description="ATP synthase subunit alpha">
    <location>
        <begin position="1"/>
        <end position="513"/>
    </location>
</feature>
<feature type="binding site" evidence="1">
    <location>
        <begin position="169"/>
        <end position="176"/>
    </location>
    <ligand>
        <name>ATP</name>
        <dbReference type="ChEBI" id="CHEBI:30616"/>
    </ligand>
</feature>
<feature type="site" description="Required for activity" evidence="1">
    <location>
        <position position="373"/>
    </location>
</feature>
<proteinExistence type="inferred from homology"/>
<keyword id="KW-0066">ATP synthesis</keyword>
<keyword id="KW-0067">ATP-binding</keyword>
<keyword id="KW-0997">Cell inner membrane</keyword>
<keyword id="KW-1003">Cell membrane</keyword>
<keyword id="KW-0139">CF(1)</keyword>
<keyword id="KW-0375">Hydrogen ion transport</keyword>
<keyword id="KW-0406">Ion transport</keyword>
<keyword id="KW-0472">Membrane</keyword>
<keyword id="KW-0547">Nucleotide-binding</keyword>
<keyword id="KW-1278">Translocase</keyword>
<keyword id="KW-0813">Transport</keyword>
<sequence>MQLNSTEISDLIKQRIEQFEVVSESRNEGTIVAVSDGIIRIHGLADVMQGEMIELPGNRFAIALNLERDSVGAVVMGPYADLAEGVKVKTTGRILEVPVGRGLLGRVVNTLGEPIDGKGPIDNDGYSPIEVIAPGVIERQSVDQPVQTGYKAVDAMIPIGRGQRELIIGDRQTGKTAMAIDAIINQKNSGIKCVYVAIGQKASTIANVVRKLEEHGALANTIVVVATASEAAALQYLAPYSGCSMGEYFRDRGEDSLIVYDDLSKQAVAYRQISLLLKRPPGREAYPGDVFYLHSRLLERASRVNAIYVEKFTKGAVTGKTGSLTALPIIETQAGDVSAFVPTNVISITDGQIFLETDLFNSGLRPAVNPGISVSRVGGAAQTKIIKKLSGGIRTALAQYRELAAFSQFASDLDDATRAQLEHGVRVTELMKQKQYAPMSVAAQAVSIFSAEKGYLKSVELNKVGNFEAALLSFMNSEHAPLMKLINDTGDYSADIEAELKAGLDKFVATQTW</sequence>
<accession>A6WUJ2</accession>
<evidence type="ECO:0000255" key="1">
    <source>
        <dbReference type="HAMAP-Rule" id="MF_01346"/>
    </source>
</evidence>
<gene>
    <name evidence="1" type="primary">atpA</name>
    <name type="ordered locus">Shew185_4367</name>
</gene>
<protein>
    <recommendedName>
        <fullName evidence="1">ATP synthase subunit alpha</fullName>
        <ecNumber evidence="1">7.1.2.2</ecNumber>
    </recommendedName>
    <alternativeName>
        <fullName evidence="1">ATP synthase F1 sector subunit alpha</fullName>
    </alternativeName>
    <alternativeName>
        <fullName evidence="1">F-ATPase subunit alpha</fullName>
    </alternativeName>
</protein>
<organism>
    <name type="scientific">Shewanella baltica (strain OS185)</name>
    <dbReference type="NCBI Taxonomy" id="402882"/>
    <lineage>
        <taxon>Bacteria</taxon>
        <taxon>Pseudomonadati</taxon>
        <taxon>Pseudomonadota</taxon>
        <taxon>Gammaproteobacteria</taxon>
        <taxon>Alteromonadales</taxon>
        <taxon>Shewanellaceae</taxon>
        <taxon>Shewanella</taxon>
    </lineage>
</organism>
<reference key="1">
    <citation type="submission" date="2007-07" db="EMBL/GenBank/DDBJ databases">
        <title>Complete sequence of chromosome of Shewanella baltica OS185.</title>
        <authorList>
            <consortium name="US DOE Joint Genome Institute"/>
            <person name="Copeland A."/>
            <person name="Lucas S."/>
            <person name="Lapidus A."/>
            <person name="Barry K."/>
            <person name="Glavina del Rio T."/>
            <person name="Dalin E."/>
            <person name="Tice H."/>
            <person name="Pitluck S."/>
            <person name="Sims D."/>
            <person name="Brettin T."/>
            <person name="Bruce D."/>
            <person name="Detter J.C."/>
            <person name="Han C."/>
            <person name="Schmutz J."/>
            <person name="Larimer F."/>
            <person name="Land M."/>
            <person name="Hauser L."/>
            <person name="Kyrpides N."/>
            <person name="Mikhailova N."/>
            <person name="Brettar I."/>
            <person name="Rodrigues J."/>
            <person name="Konstantinidis K."/>
            <person name="Tiedje J."/>
            <person name="Richardson P."/>
        </authorList>
    </citation>
    <scope>NUCLEOTIDE SEQUENCE [LARGE SCALE GENOMIC DNA]</scope>
    <source>
        <strain>OS185</strain>
    </source>
</reference>